<feature type="chain" id="PRO_0000231618" description="Splicing factor Cactin">
    <location>
        <begin position="1"/>
        <end position="772"/>
    </location>
</feature>
<feature type="region of interest" description="Disordered" evidence="3">
    <location>
        <begin position="1"/>
        <end position="164"/>
    </location>
</feature>
<feature type="region of interest" description="Disordered" evidence="3">
    <location>
        <begin position="177"/>
        <end position="202"/>
    </location>
</feature>
<feature type="region of interest" description="Disordered" evidence="3">
    <location>
        <begin position="499"/>
        <end position="550"/>
    </location>
</feature>
<feature type="coiled-coil region" evidence="2">
    <location>
        <begin position="157"/>
        <end position="207"/>
    </location>
</feature>
<feature type="coiled-coil region" evidence="2">
    <location>
        <begin position="247"/>
        <end position="299"/>
    </location>
</feature>
<feature type="compositionally biased region" description="Basic residues" evidence="3">
    <location>
        <begin position="15"/>
        <end position="77"/>
    </location>
</feature>
<feature type="compositionally biased region" description="Basic and acidic residues" evidence="3">
    <location>
        <begin position="78"/>
        <end position="88"/>
    </location>
</feature>
<feature type="compositionally biased region" description="Polar residues" evidence="3">
    <location>
        <begin position="103"/>
        <end position="112"/>
    </location>
</feature>
<feature type="compositionally biased region" description="Low complexity" evidence="3">
    <location>
        <begin position="131"/>
        <end position="141"/>
    </location>
</feature>
<feature type="compositionally biased region" description="Basic and acidic residues" evidence="3">
    <location>
        <begin position="177"/>
        <end position="200"/>
    </location>
</feature>
<feature type="modified residue" description="Phosphoserine" evidence="6">
    <location>
        <position position="148"/>
    </location>
</feature>
<feature type="modified residue" description="Phosphoserine" evidence="1">
    <location>
        <position position="498"/>
    </location>
</feature>
<feature type="modified residue" description="Phosphotyrosine" evidence="1">
    <location>
        <position position="573"/>
    </location>
</feature>
<feature type="cross-link" description="Glycyl lysine isopeptide (Lys-Gly) (interchain with G-Cter in SUMO2)" evidence="1">
    <location>
        <position position="491"/>
    </location>
</feature>
<feature type="cross-link" description="Glycyl lysine isopeptide (Lys-Gly) (interchain with G-Cter in SUMO2)" evidence="1">
    <location>
        <position position="506"/>
    </location>
</feature>
<reference key="1">
    <citation type="journal article" date="2009" name="PLoS Biol.">
        <title>Lineage-specific biology revealed by a finished genome assembly of the mouse.</title>
        <authorList>
            <person name="Church D.M."/>
            <person name="Goodstadt L."/>
            <person name="Hillier L.W."/>
            <person name="Zody M.C."/>
            <person name="Goldstein S."/>
            <person name="She X."/>
            <person name="Bult C.J."/>
            <person name="Agarwala R."/>
            <person name="Cherry J.L."/>
            <person name="DiCuccio M."/>
            <person name="Hlavina W."/>
            <person name="Kapustin Y."/>
            <person name="Meric P."/>
            <person name="Maglott D."/>
            <person name="Birtle Z."/>
            <person name="Marques A.C."/>
            <person name="Graves T."/>
            <person name="Zhou S."/>
            <person name="Teague B."/>
            <person name="Potamousis K."/>
            <person name="Churas C."/>
            <person name="Place M."/>
            <person name="Herschleb J."/>
            <person name="Runnheim R."/>
            <person name="Forrest D."/>
            <person name="Amos-Landgraf J."/>
            <person name="Schwartz D.C."/>
            <person name="Cheng Z."/>
            <person name="Lindblad-Toh K."/>
            <person name="Eichler E.E."/>
            <person name="Ponting C.P."/>
        </authorList>
    </citation>
    <scope>NUCLEOTIDE SEQUENCE [LARGE SCALE GENOMIC DNA]</scope>
    <source>
        <strain>C57BL/6J</strain>
    </source>
</reference>
<reference key="2">
    <citation type="submission" date="2000-07" db="EMBL/GenBank/DDBJ databases">
        <authorList>
            <person name="Adachi J."/>
            <person name="Aizawa K."/>
            <person name="Akahira S."/>
            <person name="Akimura T."/>
            <person name="Arai A."/>
            <person name="Aono H."/>
            <person name="Arakawa T."/>
            <person name="Bono H."/>
            <person name="Carninci P."/>
            <person name="Fukuda S."/>
            <person name="Fukunishi Y."/>
            <person name="Furuno M."/>
            <person name="Hanagaki T."/>
            <person name="Hara A."/>
            <person name="Hayatsu N."/>
            <person name="Hiramoto K."/>
            <person name="Hiraoka T."/>
            <person name="Hori F."/>
            <person name="Imotani K."/>
            <person name="Ishii Y."/>
            <person name="Itoh M."/>
            <person name="Izawa M."/>
            <person name="Kasukawa T."/>
            <person name="Kato H."/>
            <person name="Kawai J."/>
            <person name="Kojima Y."/>
            <person name="Konno H."/>
            <person name="Kouda M."/>
            <person name="Koya S."/>
            <person name="Kurihara C."/>
            <person name="Matsuyama T."/>
            <person name="Miyazaki A."/>
            <person name="Nishi K."/>
            <person name="Nomura K."/>
            <person name="Numazaki R."/>
            <person name="Ohno M."/>
            <person name="Okazaki Y."/>
            <person name="Okido T."/>
            <person name="Owa C."/>
            <person name="Saito H."/>
            <person name="Saito R."/>
            <person name="Sakai C."/>
            <person name="Sakai K."/>
            <person name="Sano H."/>
            <person name="Sasaki D."/>
            <person name="Shibata K."/>
            <person name="Shibata Y."/>
            <person name="Shinagawa A."/>
            <person name="Shiraki T."/>
            <person name="Sogabe Y."/>
            <person name="Suzuki H."/>
            <person name="Tagami M."/>
            <person name="Tagawa A."/>
            <person name="Takahashi F."/>
            <person name="Tanaka T."/>
            <person name="Tejima Y."/>
            <person name="Toya T."/>
            <person name="Yamamura T."/>
            <person name="Yasunishi A."/>
            <person name="Yoshida K."/>
            <person name="Yoshino M."/>
            <person name="Muramatsu M."/>
            <person name="Hayashizaki Y."/>
        </authorList>
    </citation>
    <scope>NUCLEOTIDE SEQUENCE [LARGE SCALE MRNA] OF 362-772</scope>
    <source>
        <strain>C57BL/6J</strain>
        <tissue>Liver</tissue>
    </source>
</reference>
<reference key="3">
    <citation type="journal article" date="2007" name="Proc. Natl. Acad. Sci. U.S.A.">
        <title>Large-scale phosphorylation analysis of mouse liver.</title>
        <authorList>
            <person name="Villen J."/>
            <person name="Beausoleil S.A."/>
            <person name="Gerber S.A."/>
            <person name="Gygi S.P."/>
        </authorList>
    </citation>
    <scope>IDENTIFICATION BY MASS SPECTROMETRY [LARGE SCALE ANALYSIS]</scope>
    <source>
        <tissue>Liver</tissue>
    </source>
</reference>
<reference key="4">
    <citation type="journal article" date="2010" name="Cell">
        <title>A tissue-specific atlas of mouse protein phosphorylation and expression.</title>
        <authorList>
            <person name="Huttlin E.L."/>
            <person name="Jedrychowski M.P."/>
            <person name="Elias J.E."/>
            <person name="Goswami T."/>
            <person name="Rad R."/>
            <person name="Beausoleil S.A."/>
            <person name="Villen J."/>
            <person name="Haas W."/>
            <person name="Sowa M.E."/>
            <person name="Gygi S.P."/>
        </authorList>
    </citation>
    <scope>PHOSPHORYLATION [LARGE SCALE ANALYSIS] AT SER-148</scope>
    <scope>IDENTIFICATION BY MASS SPECTROMETRY [LARGE SCALE ANALYSIS]</scope>
    <source>
        <tissue>Kidney</tissue>
        <tissue>Lung</tissue>
        <tissue>Pancreas</tissue>
        <tissue>Spleen</tissue>
        <tissue>Testis</tissue>
    </source>
</reference>
<reference key="5">
    <citation type="journal article" date="2010" name="J. Biol. Chem.">
        <title>Cactin targets the MHC class III protein IkappaB-like (IkappaBL) and inhibits NF-kappaB and interferon-regulatory factor signaling pathways.</title>
        <authorList>
            <person name="Atzei P."/>
            <person name="Gargan S."/>
            <person name="Curran N."/>
            <person name="Moynagh P.N."/>
        </authorList>
    </citation>
    <scope>TISSUE SPECIFICITY</scope>
</reference>
<keyword id="KW-0175">Coiled coil</keyword>
<keyword id="KW-0963">Cytoplasm</keyword>
<keyword id="KW-0217">Developmental protein</keyword>
<keyword id="KW-0391">Immunity</keyword>
<keyword id="KW-0399">Innate immunity</keyword>
<keyword id="KW-1017">Isopeptide bond</keyword>
<keyword id="KW-0507">mRNA processing</keyword>
<keyword id="KW-0508">mRNA splicing</keyword>
<keyword id="KW-0539">Nucleus</keyword>
<keyword id="KW-0597">Phosphoprotein</keyword>
<keyword id="KW-1185">Reference proteome</keyword>
<keyword id="KW-0747">Spliceosome</keyword>
<keyword id="KW-0832">Ubl conjugation</keyword>
<evidence type="ECO:0000250" key="1">
    <source>
        <dbReference type="UniProtKB" id="Q8WUQ7"/>
    </source>
</evidence>
<evidence type="ECO:0000255" key="2"/>
<evidence type="ECO:0000256" key="3">
    <source>
        <dbReference type="SAM" id="MobiDB-lite"/>
    </source>
</evidence>
<evidence type="ECO:0000269" key="4">
    <source>
    </source>
</evidence>
<evidence type="ECO:0000305" key="5"/>
<evidence type="ECO:0007744" key="6">
    <source>
    </source>
</evidence>
<proteinExistence type="evidence at protein level"/>
<organism>
    <name type="scientific">Mus musculus</name>
    <name type="common">Mouse</name>
    <dbReference type="NCBI Taxonomy" id="10090"/>
    <lineage>
        <taxon>Eukaryota</taxon>
        <taxon>Metazoa</taxon>
        <taxon>Chordata</taxon>
        <taxon>Craniata</taxon>
        <taxon>Vertebrata</taxon>
        <taxon>Euteleostomi</taxon>
        <taxon>Mammalia</taxon>
        <taxon>Eutheria</taxon>
        <taxon>Euarchontoglires</taxon>
        <taxon>Glires</taxon>
        <taxon>Rodentia</taxon>
        <taxon>Myomorpha</taxon>
        <taxon>Muroidea</taxon>
        <taxon>Muridae</taxon>
        <taxon>Murinae</taxon>
        <taxon>Mus</taxon>
        <taxon>Mus</taxon>
    </lineage>
</organism>
<accession>Q9CS00</accession>
<sequence>MRGAGRQMGRDSRSRSRSVGRRGRKQRSRSRGRSRSRSRSRSRSRSRSRSRSRSHGRSSRRRREHERRRERKRRSRGRRSDSEGEQRQKSRRRSQSLRPPRWHSQNQSSCSDSGEERAQGSWARKGHRRSWSPGSSASSLDSPRRSRSPGTATLALSQQQSLQERLRLREERKQQEELLKAFETPEEKRARRLAKKEAKERKKREKMGWGEEYMGYTNTDNPFGDNNLLGTFIWNKALEKKGISHLEEKELKERNKRIQEDNRLELQKVKQLRLEREREKAMREQELELLQREKEAEHFKTWEEQEDSFHLRQAKLRSKIRIRDGRAKPIDLLAKYISAEDDDLAVEMHEPYTFLNGLTVADMEDLLEDIQVYMELEQGKNVDFWRDMTTITEDEIAKLRKLEASGKGPGERREGVNASVSSDVQSVFKGKTYNQLQVIFQGIEGKIRAGGPNLDMGYWESLLQQLRAHMARARLRERHQDVLRQKLFKLKQEQGVESEPLFPILKSEPSAAHSPEPEERPPSPGTSVDPVEPVEPEEATAPGEAEGEAEGEAVLMEEDLIQQSLADYDAGRYSPRLLTAHELPLDAHVLEPHEDLQRLQLSRQQLQATGDASESAEDIFFRRAREGMGQDEAQFSVEMPLGGRAYLWADKYRPRKPRFFNRVHTGFEWNKYNQTHYDFDNPPPKIVQGYKFNIFYPDLIRKRATPEYFLEACADNRDFAILRFHAGPPYEDIAFKIVSREWEYSHRHGFRCQFANGIFQLWFHFKRYRYRR</sequence>
<gene>
    <name type="primary">Cactin</name>
</gene>
<name>CATIN_MOUSE</name>
<protein>
    <recommendedName>
        <fullName evidence="5">Splicing factor Cactin</fullName>
    </recommendedName>
</protein>
<dbReference type="EMBL" id="AC155937">
    <property type="status" value="NOT_ANNOTATED_CDS"/>
    <property type="molecule type" value="Genomic_DNA"/>
</dbReference>
<dbReference type="EMBL" id="AK010963">
    <property type="protein sequence ID" value="BAB27295.1"/>
    <property type="molecule type" value="mRNA"/>
</dbReference>
<dbReference type="CCDS" id="CCDS35995.1"/>
<dbReference type="RefSeq" id="NP_081657.1">
    <property type="nucleotide sequence ID" value="NM_027381.2"/>
</dbReference>
<dbReference type="SMR" id="Q9CS00"/>
<dbReference type="BioGRID" id="213980">
    <property type="interactions" value="28"/>
</dbReference>
<dbReference type="FunCoup" id="Q9CS00">
    <property type="interactions" value="4261"/>
</dbReference>
<dbReference type="STRING" id="10090.ENSMUSP00000059533"/>
<dbReference type="iPTMnet" id="Q9CS00"/>
<dbReference type="PhosphoSitePlus" id="Q9CS00"/>
<dbReference type="jPOST" id="Q9CS00"/>
<dbReference type="PaxDb" id="10090-ENSMUSP00000059533"/>
<dbReference type="ProteomicsDB" id="265542"/>
<dbReference type="Pumba" id="Q9CS00"/>
<dbReference type="Antibodypedia" id="52584">
    <property type="antibodies" value="83 antibodies from 19 providers"/>
</dbReference>
<dbReference type="Ensembl" id="ENSMUST00000050867.8">
    <property type="protein sequence ID" value="ENSMUSP00000059533.7"/>
    <property type="gene ID" value="ENSMUSG00000034889.9"/>
</dbReference>
<dbReference type="GeneID" id="70312"/>
<dbReference type="KEGG" id="mmu:70312"/>
<dbReference type="UCSC" id="uc007ghf.2">
    <property type="organism name" value="mouse"/>
</dbReference>
<dbReference type="AGR" id="MGI:1917562"/>
<dbReference type="CTD" id="58509"/>
<dbReference type="MGI" id="MGI:1917562">
    <property type="gene designation" value="Cactin"/>
</dbReference>
<dbReference type="VEuPathDB" id="HostDB:ENSMUSG00000034889"/>
<dbReference type="eggNOG" id="KOG2370">
    <property type="taxonomic scope" value="Eukaryota"/>
</dbReference>
<dbReference type="GeneTree" id="ENSGT00950000183102"/>
<dbReference type="HOGENOM" id="CLU_011759_0_0_1"/>
<dbReference type="InParanoid" id="Q9CS00"/>
<dbReference type="OMA" id="HIDFWND"/>
<dbReference type="OrthoDB" id="265955at2759"/>
<dbReference type="PhylomeDB" id="Q9CS00"/>
<dbReference type="TreeFam" id="TF300906"/>
<dbReference type="Reactome" id="R-MMU-72163">
    <property type="pathway name" value="mRNA Splicing - Major Pathway"/>
</dbReference>
<dbReference type="BioGRID-ORCS" id="70312">
    <property type="hits" value="20 hits in 80 CRISPR screens"/>
</dbReference>
<dbReference type="ChiTaRS" id="Cactin">
    <property type="organism name" value="mouse"/>
</dbReference>
<dbReference type="PRO" id="PR:Q9CS00"/>
<dbReference type="Proteomes" id="UP000000589">
    <property type="component" value="Chromosome 10"/>
</dbReference>
<dbReference type="RNAct" id="Q9CS00">
    <property type="molecule type" value="protein"/>
</dbReference>
<dbReference type="Bgee" id="ENSMUSG00000034889">
    <property type="expression patterns" value="Expressed in dorsal pancreas and 225 other cell types or tissues"/>
</dbReference>
<dbReference type="ExpressionAtlas" id="Q9CS00">
    <property type="expression patterns" value="baseline and differential"/>
</dbReference>
<dbReference type="GO" id="GO:0071013">
    <property type="term" value="C:catalytic step 2 spliceosome"/>
    <property type="evidence" value="ECO:0007669"/>
    <property type="project" value="Ensembl"/>
</dbReference>
<dbReference type="GO" id="GO:0005829">
    <property type="term" value="C:cytosol"/>
    <property type="evidence" value="ECO:0007669"/>
    <property type="project" value="UniProtKB-SubCell"/>
</dbReference>
<dbReference type="GO" id="GO:0016607">
    <property type="term" value="C:nuclear speck"/>
    <property type="evidence" value="ECO:0007669"/>
    <property type="project" value="Ensembl"/>
</dbReference>
<dbReference type="GO" id="GO:0005634">
    <property type="term" value="C:nucleus"/>
    <property type="evidence" value="ECO:0000250"/>
    <property type="project" value="UniProtKB"/>
</dbReference>
<dbReference type="GO" id="GO:0071347">
    <property type="term" value="P:cellular response to interleukin-1"/>
    <property type="evidence" value="ECO:0000250"/>
    <property type="project" value="UniProtKB"/>
</dbReference>
<dbReference type="GO" id="GO:0071222">
    <property type="term" value="P:cellular response to lipopolysaccharide"/>
    <property type="evidence" value="ECO:0000250"/>
    <property type="project" value="UniProtKB"/>
</dbReference>
<dbReference type="GO" id="GO:0071356">
    <property type="term" value="P:cellular response to tumor necrosis factor"/>
    <property type="evidence" value="ECO:0000250"/>
    <property type="project" value="UniProtKB"/>
</dbReference>
<dbReference type="GO" id="GO:0045087">
    <property type="term" value="P:innate immune response"/>
    <property type="evidence" value="ECO:0007669"/>
    <property type="project" value="UniProtKB-KW"/>
</dbReference>
<dbReference type="GO" id="GO:0000398">
    <property type="term" value="P:mRNA splicing, via spliceosome"/>
    <property type="evidence" value="ECO:0000250"/>
    <property type="project" value="UniProtKB"/>
</dbReference>
<dbReference type="GO" id="GO:0043124">
    <property type="term" value="P:negative regulation of canonical NF-kappaB signal transduction"/>
    <property type="evidence" value="ECO:0000250"/>
    <property type="project" value="UniProtKB"/>
</dbReference>
<dbReference type="GO" id="GO:0032688">
    <property type="term" value="P:negative regulation of interferon-beta production"/>
    <property type="evidence" value="ECO:0000250"/>
    <property type="project" value="UniProtKB"/>
</dbReference>
<dbReference type="GO" id="GO:0032717">
    <property type="term" value="P:negative regulation of interleukin-8 production"/>
    <property type="evidence" value="ECO:0000250"/>
    <property type="project" value="UniProtKB"/>
</dbReference>
<dbReference type="GO" id="GO:0031665">
    <property type="term" value="P:negative regulation of lipopolysaccharide-mediated signaling pathway"/>
    <property type="evidence" value="ECO:0000250"/>
    <property type="project" value="UniProtKB"/>
</dbReference>
<dbReference type="GO" id="GO:0032088">
    <property type="term" value="P:negative regulation of NF-kappaB transcription factor activity"/>
    <property type="evidence" value="ECO:0000250"/>
    <property type="project" value="UniProtKB"/>
</dbReference>
<dbReference type="GO" id="GO:0001933">
    <property type="term" value="P:negative regulation of protein phosphorylation"/>
    <property type="evidence" value="ECO:0000250"/>
    <property type="project" value="UniProtKB"/>
</dbReference>
<dbReference type="GO" id="GO:0034122">
    <property type="term" value="P:negative regulation of toll-like receptor signaling pathway"/>
    <property type="evidence" value="ECO:0000250"/>
    <property type="project" value="UniProtKB"/>
</dbReference>
<dbReference type="GO" id="GO:0032720">
    <property type="term" value="P:negative regulation of tumor necrosis factor production"/>
    <property type="evidence" value="ECO:0000250"/>
    <property type="project" value="UniProtKB"/>
</dbReference>
<dbReference type="GO" id="GO:0060339">
    <property type="term" value="P:negative regulation of type I interferon-mediated signaling pathway"/>
    <property type="evidence" value="ECO:0000250"/>
    <property type="project" value="UniProtKB"/>
</dbReference>
<dbReference type="InterPro" id="IPR019134">
    <property type="entry name" value="Cactin_C"/>
</dbReference>
<dbReference type="InterPro" id="IPR018816">
    <property type="entry name" value="Cactin_central"/>
</dbReference>
<dbReference type="PANTHER" id="PTHR21737">
    <property type="entry name" value="POLYGLUTAMINE BINDING PROTEIN 1/MARVEL MEMBRANE-ASSOCIATING DOMAIN CONTAINING 3"/>
    <property type="match status" value="1"/>
</dbReference>
<dbReference type="PANTHER" id="PTHR21737:SF6">
    <property type="entry name" value="SPLICING FACTOR CACTIN"/>
    <property type="match status" value="1"/>
</dbReference>
<dbReference type="Pfam" id="PF10312">
    <property type="entry name" value="Cactin_mid"/>
    <property type="match status" value="1"/>
</dbReference>
<dbReference type="Pfam" id="PF09732">
    <property type="entry name" value="CactinC_cactus"/>
    <property type="match status" value="1"/>
</dbReference>
<dbReference type="SMART" id="SM01050">
    <property type="entry name" value="CactinC_cactus"/>
    <property type="match status" value="1"/>
</dbReference>
<comment type="function">
    <text evidence="1">Plays a role in pre-mRNA splicing by facilitating excision of a subset of introns (By similarity). Required for the splicing of CDCA5/Sororin, a regulator of sister chromatid cohesion (By similarity). Involved in the regulation of innate immune response (By similarity). Acts as a negative regulator of Toll-like receptor, interferon-regulatory factor (IRF) and canonical NF-kappa-B signaling pathways (By similarity). Contributes to the regulation of transcriptional activation of NF-kappa-B target genes in response to endogenous pro-inflammatory stimuli (By similarity).</text>
</comment>
<comment type="subunit">
    <text evidence="1">Interacts (via N-terminal domain) with NFKBIL1; the interaction occurs in a pro-inflammatory-independent manner (By similarity). Does not interact with RELA NF-kappa-B subunit (By similarity). Identified in the spliceosome C complex (By similarity). Interacts with SF3B1 (By similarity). Interacts with SDE2 (By similarity). Interacts with SRRM2 (By similarity). Interacts with DHX8 (By similarity).</text>
</comment>
<comment type="subcellular location">
    <subcellularLocation>
        <location evidence="1">Nucleus</location>
    </subcellularLocation>
    <subcellularLocation>
        <location evidence="1">Cytoplasm</location>
        <location evidence="1">Cytosol</location>
    </subcellularLocation>
    <text evidence="1">Nuclear localization with a speckled expression pattern in some cells. Colocalizes with NFKBIL1 in the nucleus (By similarity).</text>
</comment>
<comment type="tissue specificity">
    <text evidence="4">Expressed in cortex, hippocampus, cerebellum, heart, lung, kidney, liver, spleen and thymus.</text>
</comment>
<comment type="similarity">
    <text evidence="5">Belongs to the CACTIN family.</text>
</comment>